<gene>
    <name type="primary">sigG</name>
    <name type="ordered locus">MT0191</name>
</gene>
<reference key="1">
    <citation type="journal article" date="2002" name="J. Bacteriol.">
        <title>Whole-genome comparison of Mycobacterium tuberculosis clinical and laboratory strains.</title>
        <authorList>
            <person name="Fleischmann R.D."/>
            <person name="Alland D."/>
            <person name="Eisen J.A."/>
            <person name="Carpenter L."/>
            <person name="White O."/>
            <person name="Peterson J.D."/>
            <person name="DeBoy R.T."/>
            <person name="Dodson R.J."/>
            <person name="Gwinn M.L."/>
            <person name="Haft D.H."/>
            <person name="Hickey E.K."/>
            <person name="Kolonay J.F."/>
            <person name="Nelson W.C."/>
            <person name="Umayam L.A."/>
            <person name="Ermolaeva M.D."/>
            <person name="Salzberg S.L."/>
            <person name="Delcher A."/>
            <person name="Utterback T.R."/>
            <person name="Weidman J.F."/>
            <person name="Khouri H.M."/>
            <person name="Gill J."/>
            <person name="Mikula A."/>
            <person name="Bishai W."/>
            <person name="Jacobs W.R. Jr."/>
            <person name="Venter J.C."/>
            <person name="Fraser C.M."/>
        </authorList>
    </citation>
    <scope>NUCLEOTIDE SEQUENCE [LARGE SCALE GENOMIC DNA]</scope>
    <source>
        <strain>CDC 1551 / Oshkosh</strain>
    </source>
</reference>
<reference key="2">
    <citation type="journal article" date="2008" name="J. Bacteriol.">
        <title>Role of stress response sigma factor SigG in Mycobacterium tuberculosis.</title>
        <authorList>
            <person name="Lee J.H."/>
            <person name="Geiman D.E."/>
            <person name="Bishai W.R."/>
        </authorList>
    </citation>
    <scope>FUNCTION</scope>
    <scope>DISRUPTION PHENOTYPE</scope>
    <scope>REGULON</scope>
    <source>
        <strain>CDC 1551 / Oshkosh</strain>
    </source>
</reference>
<keyword id="KW-0238">DNA-binding</keyword>
<keyword id="KW-1185">Reference proteome</keyword>
<keyword id="KW-0731">Sigma factor</keyword>
<keyword id="KW-0804">Transcription</keyword>
<keyword id="KW-0805">Transcription regulation</keyword>
<sequence length="370" mass="40983">MRTSPMPAKFRSVRVVVITGSVTAAPVRVSETLRRLIDVSVLAENSGREPADERRGDFSAHTEPYRRELLAHCYRMTGSLHDAEDLVQETLLRAWKAYEGFAGKSSLRTWLHRIATNTCLTALEGRRRRPLPTGLGRPSADPSGELVERREVSWLEPLPDVTDDPADPSTIVGNRESVRLAFVAALQHLSPRQRAVLLLRDVLQWKSAEVADAIGTSTVAVNSLLQRARSQLQTVRPSAADRLSAPDSPEAQDLLARYIAAFEAYDIDRLVELFTAEAIWEMPPYTGWYQGAQAIVTLIHQQCPAYSPGDMRLISLIANGQPAAAMYMRAGDVHLPFQLHVLDMAADRVSHVVAFLDTTLFPKFGLPDSL</sequence>
<organism>
    <name type="scientific">Mycobacterium tuberculosis (strain CDC 1551 / Oshkosh)</name>
    <dbReference type="NCBI Taxonomy" id="83331"/>
    <lineage>
        <taxon>Bacteria</taxon>
        <taxon>Bacillati</taxon>
        <taxon>Actinomycetota</taxon>
        <taxon>Actinomycetes</taxon>
        <taxon>Mycobacteriales</taxon>
        <taxon>Mycobacteriaceae</taxon>
        <taxon>Mycobacterium</taxon>
        <taxon>Mycobacterium tuberculosis complex</taxon>
    </lineage>
</organism>
<evidence type="ECO:0000250" key="1"/>
<evidence type="ECO:0000255" key="2"/>
<evidence type="ECO:0000269" key="3">
    <source>
    </source>
</evidence>
<evidence type="ECO:0000305" key="4"/>
<name>SIGG_MYCTO</name>
<protein>
    <recommendedName>
        <fullName>ECF RNA polymerase sigma factor SigG</fullName>
        <shortName>ECF sigma factor SigG</shortName>
    </recommendedName>
    <alternativeName>
        <fullName>Alternative RNA polymerase sigma factor SigG</fullName>
    </alternativeName>
    <alternativeName>
        <fullName>RNA polymerase sigma-G factor</fullName>
        <shortName>Sigma-g factor</shortName>
    </alternativeName>
</protein>
<proteinExistence type="inferred from homology"/>
<dbReference type="EMBL" id="AE000516">
    <property type="protein sequence ID" value="AAK44411.1"/>
    <property type="molecule type" value="Genomic_DNA"/>
</dbReference>
<dbReference type="PIR" id="A70906">
    <property type="entry name" value="A70906"/>
</dbReference>
<dbReference type="RefSeq" id="WP_003401110.1">
    <property type="nucleotide sequence ID" value="NZ_KK341227.1"/>
</dbReference>
<dbReference type="SMR" id="P9WGG4"/>
<dbReference type="KEGG" id="mtc:MT0191"/>
<dbReference type="PATRIC" id="fig|83331.31.peg.208"/>
<dbReference type="HOGENOM" id="CLU_043648_0_0_11"/>
<dbReference type="Proteomes" id="UP000001020">
    <property type="component" value="Chromosome"/>
</dbReference>
<dbReference type="GO" id="GO:0003677">
    <property type="term" value="F:DNA binding"/>
    <property type="evidence" value="ECO:0007669"/>
    <property type="project" value="UniProtKB-KW"/>
</dbReference>
<dbReference type="GO" id="GO:0016987">
    <property type="term" value="F:sigma factor activity"/>
    <property type="evidence" value="ECO:0007669"/>
    <property type="project" value="UniProtKB-KW"/>
</dbReference>
<dbReference type="GO" id="GO:0006352">
    <property type="term" value="P:DNA-templated transcription initiation"/>
    <property type="evidence" value="ECO:0007669"/>
    <property type="project" value="InterPro"/>
</dbReference>
<dbReference type="GO" id="GO:0006950">
    <property type="term" value="P:response to stress"/>
    <property type="evidence" value="ECO:0007669"/>
    <property type="project" value="UniProtKB-ARBA"/>
</dbReference>
<dbReference type="CDD" id="cd06171">
    <property type="entry name" value="Sigma70_r4"/>
    <property type="match status" value="1"/>
</dbReference>
<dbReference type="FunFam" id="1.10.10.10:FF:000959">
    <property type="entry name" value="RNA polymerase sigma factor"/>
    <property type="match status" value="1"/>
</dbReference>
<dbReference type="Gene3D" id="1.10.1740.10">
    <property type="match status" value="1"/>
</dbReference>
<dbReference type="Gene3D" id="3.10.450.50">
    <property type="match status" value="1"/>
</dbReference>
<dbReference type="Gene3D" id="1.10.10.10">
    <property type="entry name" value="Winged helix-like DNA-binding domain superfamily/Winged helix DNA-binding domain"/>
    <property type="match status" value="1"/>
</dbReference>
<dbReference type="InterPro" id="IPR032710">
    <property type="entry name" value="NTF2-like_dom_sf"/>
</dbReference>
<dbReference type="InterPro" id="IPR039425">
    <property type="entry name" value="RNA_pol_sigma-70-like"/>
</dbReference>
<dbReference type="InterPro" id="IPR014284">
    <property type="entry name" value="RNA_pol_sigma-70_dom"/>
</dbReference>
<dbReference type="InterPro" id="IPR014305">
    <property type="entry name" value="RNA_pol_sigma-G_actinobac"/>
</dbReference>
<dbReference type="InterPro" id="IPR000838">
    <property type="entry name" value="RNA_pol_sigma70_ECF_CS"/>
</dbReference>
<dbReference type="InterPro" id="IPR007627">
    <property type="entry name" value="RNA_pol_sigma70_r2"/>
</dbReference>
<dbReference type="InterPro" id="IPR013249">
    <property type="entry name" value="RNA_pol_sigma70_r4_t2"/>
</dbReference>
<dbReference type="InterPro" id="IPR013325">
    <property type="entry name" value="RNA_pol_sigma_r2"/>
</dbReference>
<dbReference type="InterPro" id="IPR013324">
    <property type="entry name" value="RNA_pol_sigma_r3/r4-like"/>
</dbReference>
<dbReference type="InterPro" id="IPR037401">
    <property type="entry name" value="SnoaL-like"/>
</dbReference>
<dbReference type="InterPro" id="IPR036388">
    <property type="entry name" value="WH-like_DNA-bd_sf"/>
</dbReference>
<dbReference type="NCBIfam" id="NF006089">
    <property type="entry name" value="PRK08241.1"/>
    <property type="match status" value="1"/>
</dbReference>
<dbReference type="NCBIfam" id="TIGR02937">
    <property type="entry name" value="sigma70-ECF"/>
    <property type="match status" value="1"/>
</dbReference>
<dbReference type="NCBIfam" id="TIGR02960">
    <property type="entry name" value="SigX5"/>
    <property type="match status" value="1"/>
</dbReference>
<dbReference type="PANTHER" id="PTHR43133:SF65">
    <property type="entry name" value="ECF RNA POLYMERASE SIGMA FACTOR SIGG"/>
    <property type="match status" value="1"/>
</dbReference>
<dbReference type="PANTHER" id="PTHR43133">
    <property type="entry name" value="RNA POLYMERASE ECF-TYPE SIGMA FACTO"/>
    <property type="match status" value="1"/>
</dbReference>
<dbReference type="Pfam" id="PF04542">
    <property type="entry name" value="Sigma70_r2"/>
    <property type="match status" value="1"/>
</dbReference>
<dbReference type="Pfam" id="PF08281">
    <property type="entry name" value="Sigma70_r4_2"/>
    <property type="match status" value="1"/>
</dbReference>
<dbReference type="Pfam" id="PF12680">
    <property type="entry name" value="SnoaL_2"/>
    <property type="match status" value="1"/>
</dbReference>
<dbReference type="SUPFAM" id="SSF54427">
    <property type="entry name" value="NTF2-like"/>
    <property type="match status" value="1"/>
</dbReference>
<dbReference type="SUPFAM" id="SSF88946">
    <property type="entry name" value="Sigma2 domain of RNA polymerase sigma factors"/>
    <property type="match status" value="1"/>
</dbReference>
<dbReference type="SUPFAM" id="SSF88659">
    <property type="entry name" value="Sigma3 and sigma4 domains of RNA polymerase sigma factors"/>
    <property type="match status" value="1"/>
</dbReference>
<dbReference type="PROSITE" id="PS01063">
    <property type="entry name" value="SIGMA70_ECF"/>
    <property type="match status" value="1"/>
</dbReference>
<accession>P9WGG4</accession>
<accession>L7N5U5</accession>
<feature type="chain" id="PRO_0000428366" description="ECF RNA polymerase sigma factor SigG">
    <location>
        <begin position="1"/>
        <end position="370"/>
    </location>
</feature>
<feature type="DNA-binding region" description="H-T-H motif" evidence="1">
    <location>
        <begin position="207"/>
        <end position="226"/>
    </location>
</feature>
<feature type="region of interest" description="Sigma-70 factor domain-2">
    <location>
        <begin position="63"/>
        <end position="129"/>
    </location>
</feature>
<feature type="region of interest" description="Sigma-70 factor domain-4">
    <location>
        <begin position="180"/>
        <end position="232"/>
    </location>
</feature>
<feature type="short sequence motif" description="Polymerase core binding" evidence="2">
    <location>
        <begin position="85"/>
        <end position="88"/>
    </location>
</feature>
<comment type="function">
    <text evidence="3">Sigma factors are initiation factors that promote the attachment of RNA polymerase to specific initiation sites and are then released. Extracytoplasmic function (ECF) sigma factors are held in an inactive form by a cognate anti-sigma factor until released, although no anti-sigma factor is known for this protein. May be involved in host intracellular survival after infection (strains H37Rv and CDC 1551). A role in the SOS response is controversial; it has been seen in strain CDC 1551 (PubMed:18039768) but not in H37Rv (PubMed:21169493).</text>
</comment>
<comment type="subunit">
    <text evidence="1">Interacts transiently with the RNA polymerase catalytic core formed by RpoA, RpoB, RpoC and RpoZ (2 alpha, 1 beta, 1 beta' and 1 omega subunit) to form the RNA polymerase holoenzyme that can initiate transcription.</text>
</comment>
<comment type="domain">
    <text evidence="1">The sigma-70 factor domain-2 mediates sequence-specific interaction with the -10 element in promoter DNA, and plays an important role in melting the double-stranded DNA and the formation of the transcription bubble. The sigma-70 factor domain 2 mediates interaction with the RNA polymerase subunits RpoB and RpoC (By similarity).</text>
</comment>
<comment type="domain">
    <text evidence="1">The sigma-70 factor domain-4 contains a helix-turn-helix (H-T-H) motif that mediates interaction with the -35 element in promoter DNA. The domain also mediates interaction with the RNA polymerase subunit RpoA (By similarity).</text>
</comment>
<comment type="disruption phenotype">
    <text evidence="3">Not essential. Slight repression of sigH, sigF, and lexA, slight induction of sigD. Increased resistance to mitomycin C, reduced survival in mouse-derived J774A.1 macrophages after 6 days growth (PubMed:18039768).</text>
</comment>
<comment type="similarity">
    <text evidence="4">Belongs to the sigma-70 factor family. ECF subfamily.</text>
</comment>